<name>WSD_ACIAD</name>
<sequence length="458" mass="51780">MRPLHPIDFIFLSLEKRQQPMHVGGLFLFQIPDNAPDTFIQDLVNDIRISKSIPVPPFNNKLNGLFWDEDEEFDLDHHFRHIALPHPGRIRELLIYISQEHSTLLDRAKPLWTCNIIEGIEGNRFAMYFKIHHAMVDGVAGMRLIEKSLSHDVTEKSIVPPWCVEGKRAKRLREPKTGKIKKIMSGIKSQLQATPTVIQELSQTVFKDIGRNPDHVSSFQAPCSILNQRVSSSRRFAAQSFDLDRFRNIAKSLNVTINDVVLAVCSGALRAYLMSHNSLPSKPLIAMVPASIRNDDSDVSNRITMILANLATHKDDPLQRLEIIRRSVQNSKQRFKRMTSDQILNYSAVVYGPAGLNIISGMMPKRQAFNLVISNVPGPREPLYWNGAKLDALYPASIVLDGQALNITMTSYLDKLEVGLIACRNALPRMQNLLTHLEEEIQLFEGVIAKQEDIKTAN</sequence>
<protein>
    <recommendedName>
        <fullName>O-acyltransferase WSD</fullName>
    </recommendedName>
    <alternativeName>
        <fullName>Diacylglycerol O-acyltransferase</fullName>
        <shortName>DGAT</shortName>
        <ecNumber>2.3.1.20</ecNumber>
    </alternativeName>
    <alternativeName>
        <fullName>Long-chain-alcohol O-fatty-acyltransferase</fullName>
        <ecNumber>2.3.1.75</ecNumber>
    </alternativeName>
    <alternativeName>
        <fullName>Wax ester synthase/acyl-CoA:diacylglycerol acyltransferase</fullName>
    </alternativeName>
    <alternativeName>
        <fullName>Wax synthase</fullName>
        <shortName>WS</shortName>
    </alternativeName>
</protein>
<gene>
    <name type="primary">wax-dgaT</name>
    <name type="ordered locus">ACIAD0832</name>
</gene>
<dbReference type="EC" id="2.3.1.20"/>
<dbReference type="EC" id="2.3.1.75"/>
<dbReference type="EMBL" id="AF529086">
    <property type="protein sequence ID" value="AAO17391.1"/>
    <property type="molecule type" value="Genomic_DNA"/>
</dbReference>
<dbReference type="EMBL" id="CR543861">
    <property type="protein sequence ID" value="CAG67733.1"/>
    <property type="molecule type" value="Genomic_DNA"/>
</dbReference>
<dbReference type="RefSeq" id="WP_004922247.1">
    <property type="nucleotide sequence ID" value="NC_005966.1"/>
</dbReference>
<dbReference type="PDB" id="7NXG">
    <property type="method" value="X-ray"/>
    <property type="resolution" value="1.95 A"/>
    <property type="chains" value="A=1-458"/>
</dbReference>
<dbReference type="PDBsum" id="7NXG"/>
<dbReference type="SMR" id="Q8GGG1"/>
<dbReference type="STRING" id="202950.GCA_001485005_02586"/>
<dbReference type="GeneID" id="45233297"/>
<dbReference type="KEGG" id="aci:ACIAD0832"/>
<dbReference type="eggNOG" id="COG1020">
    <property type="taxonomic scope" value="Bacteria"/>
</dbReference>
<dbReference type="HOGENOM" id="CLU_024186_4_1_6"/>
<dbReference type="OrthoDB" id="9810950at2"/>
<dbReference type="BioCyc" id="ASP62977:ACIAD_RS03845-MONOMER"/>
<dbReference type="BioCyc" id="MetaCyc:ACIAD0832-MONOMER"/>
<dbReference type="BRENDA" id="2.3.1.20">
    <property type="organism ID" value="8909"/>
</dbReference>
<dbReference type="BRENDA" id="2.3.1.75">
    <property type="organism ID" value="8909"/>
</dbReference>
<dbReference type="SABIO-RK" id="Q8GGG1"/>
<dbReference type="UniPathway" id="UPA00282"/>
<dbReference type="Proteomes" id="UP000000430">
    <property type="component" value="Chromosome"/>
</dbReference>
<dbReference type="GO" id="GO:0005886">
    <property type="term" value="C:plasma membrane"/>
    <property type="evidence" value="ECO:0007669"/>
    <property type="project" value="TreeGrafter"/>
</dbReference>
<dbReference type="GO" id="GO:0004144">
    <property type="term" value="F:diacylglycerol O-acyltransferase activity"/>
    <property type="evidence" value="ECO:0007669"/>
    <property type="project" value="UniProtKB-EC"/>
</dbReference>
<dbReference type="GO" id="GO:0047196">
    <property type="term" value="F:long-chain-alcohol O-fatty-acyltransferase activity"/>
    <property type="evidence" value="ECO:0007669"/>
    <property type="project" value="UniProtKB-EC"/>
</dbReference>
<dbReference type="GO" id="GO:0051701">
    <property type="term" value="P:biological process involved in interaction with host"/>
    <property type="evidence" value="ECO:0007669"/>
    <property type="project" value="TreeGrafter"/>
</dbReference>
<dbReference type="GO" id="GO:0006071">
    <property type="term" value="P:glycerol metabolic process"/>
    <property type="evidence" value="ECO:0007669"/>
    <property type="project" value="UniProtKB-KW"/>
</dbReference>
<dbReference type="GO" id="GO:0001666">
    <property type="term" value="P:response to hypoxia"/>
    <property type="evidence" value="ECO:0007669"/>
    <property type="project" value="TreeGrafter"/>
</dbReference>
<dbReference type="GO" id="GO:0071731">
    <property type="term" value="P:response to nitric oxide"/>
    <property type="evidence" value="ECO:0007669"/>
    <property type="project" value="TreeGrafter"/>
</dbReference>
<dbReference type="GO" id="GO:0019432">
    <property type="term" value="P:triglyceride biosynthetic process"/>
    <property type="evidence" value="ECO:0007669"/>
    <property type="project" value="UniProtKB-UniPathway"/>
</dbReference>
<dbReference type="InterPro" id="IPR014292">
    <property type="entry name" value="Acyl_transf_WS/DGAT"/>
</dbReference>
<dbReference type="InterPro" id="IPR045034">
    <property type="entry name" value="O-acyltransferase_WSD1-like"/>
</dbReference>
<dbReference type="InterPro" id="IPR009721">
    <property type="entry name" value="O-acyltransferase_WSD1_C"/>
</dbReference>
<dbReference type="InterPro" id="IPR004255">
    <property type="entry name" value="O-acyltransferase_WSD1_N"/>
</dbReference>
<dbReference type="NCBIfam" id="TIGR02946">
    <property type="entry name" value="acyl_WS_DGAT"/>
    <property type="match status" value="1"/>
</dbReference>
<dbReference type="PANTHER" id="PTHR31650">
    <property type="entry name" value="O-ACYLTRANSFERASE (WSD1-LIKE) FAMILY PROTEIN"/>
    <property type="match status" value="1"/>
</dbReference>
<dbReference type="PANTHER" id="PTHR31650:SF1">
    <property type="entry name" value="WAX ESTER SYNTHASE_DIACYLGLYCEROL ACYLTRANSFERASE 4-RELATED"/>
    <property type="match status" value="1"/>
</dbReference>
<dbReference type="Pfam" id="PF06974">
    <property type="entry name" value="WS_DGAT_C"/>
    <property type="match status" value="1"/>
</dbReference>
<dbReference type="Pfam" id="PF03007">
    <property type="entry name" value="WS_DGAT_cat"/>
    <property type="match status" value="1"/>
</dbReference>
<reference key="1">
    <citation type="journal article" date="2003" name="J. Biol. Chem.">
        <title>A novel bifunctional wax ester synthase/acyl-CoA:diacylglycerol acyltransferase mediates wax ester and triacylglycerol biosynthesis in Acinetobacter calcoaceticus ADP1.</title>
        <authorList>
            <person name="Kalscheuer R."/>
            <person name="Steinbuchel A."/>
        </authorList>
    </citation>
    <scope>NUCLEOTIDE SEQUENCE [GENOMIC DNA]</scope>
    <scope>BIOPHYSICOCHEMICAL PROPERTIES</scope>
    <scope>EXPRESSION IN OTHER BACTERIA</scope>
    <scope>DISRUPTION PHENOTYPE</scope>
</reference>
<reference key="2">
    <citation type="journal article" date="2004" name="Nucleic Acids Res.">
        <title>Unique features revealed by the genome sequence of Acinetobacter sp. ADP1, a versatile and naturally transformation competent bacterium.</title>
        <authorList>
            <person name="Barbe V."/>
            <person name="Vallenet D."/>
            <person name="Fonknechten N."/>
            <person name="Kreimeyer A."/>
            <person name="Oztas S."/>
            <person name="Labarre L."/>
            <person name="Cruveiller S."/>
            <person name="Robert C."/>
            <person name="Duprat S."/>
            <person name="Wincker P."/>
            <person name="Ornston L.N."/>
            <person name="Weissenbach J."/>
            <person name="Marliere P."/>
            <person name="Cohen G.N."/>
            <person name="Medigue C."/>
        </authorList>
    </citation>
    <scope>NUCLEOTIDE SEQUENCE [LARGE SCALE GENOMIC DNA]</scope>
    <source>
        <strain>ATCC 33305 / BD413 / ADP1</strain>
    </source>
</reference>
<evidence type="ECO:0000255" key="1"/>
<evidence type="ECO:0000269" key="2">
    <source>
    </source>
</evidence>
<evidence type="ECO:0000305" key="3"/>
<evidence type="ECO:0007829" key="4">
    <source>
        <dbReference type="PDB" id="7NXG"/>
    </source>
</evidence>
<feature type="chain" id="PRO_0000393350" description="O-acyltransferase WSD">
    <location>
        <begin position="1"/>
        <end position="458"/>
    </location>
</feature>
<feature type="active site" description="Proton acceptor" evidence="1">
    <location>
        <position position="133"/>
    </location>
</feature>
<feature type="strand" evidence="4">
    <location>
        <begin position="1"/>
        <end position="3"/>
    </location>
</feature>
<feature type="helix" evidence="4">
    <location>
        <begin position="6"/>
        <end position="13"/>
    </location>
</feature>
<feature type="strand" evidence="4">
    <location>
        <begin position="22"/>
        <end position="30"/>
    </location>
</feature>
<feature type="helix" evidence="4">
    <location>
        <begin position="39"/>
        <end position="49"/>
    </location>
</feature>
<feature type="turn" evidence="4">
    <location>
        <begin position="56"/>
        <end position="59"/>
    </location>
</feature>
<feature type="strand" evidence="4">
    <location>
        <begin position="60"/>
        <end position="63"/>
    </location>
</feature>
<feature type="strand" evidence="4">
    <location>
        <begin position="66"/>
        <end position="69"/>
    </location>
</feature>
<feature type="helix" evidence="4">
    <location>
        <begin position="75"/>
        <end position="78"/>
    </location>
</feature>
<feature type="strand" evidence="4">
    <location>
        <begin position="79"/>
        <end position="83"/>
    </location>
</feature>
<feature type="helix" evidence="4">
    <location>
        <begin position="90"/>
        <end position="101"/>
    </location>
</feature>
<feature type="strand" evidence="4">
    <location>
        <begin position="111"/>
        <end position="120"/>
    </location>
</feature>
<feature type="turn" evidence="4">
    <location>
        <begin position="121"/>
        <end position="123"/>
    </location>
</feature>
<feature type="strand" evidence="4">
    <location>
        <begin position="124"/>
        <end position="132"/>
    </location>
</feature>
<feature type="turn" evidence="4">
    <location>
        <begin position="133"/>
        <end position="135"/>
    </location>
</feature>
<feature type="helix" evidence="4">
    <location>
        <begin position="138"/>
        <end position="148"/>
    </location>
</feature>
<feature type="strand" evidence="4">
    <location>
        <begin position="149"/>
        <end position="151"/>
    </location>
</feature>
<feature type="helix" evidence="4">
    <location>
        <begin position="161"/>
        <end position="163"/>
    </location>
</feature>
<feature type="strand" evidence="4">
    <location>
        <begin position="234"/>
        <end position="242"/>
    </location>
</feature>
<feature type="helix" evidence="4">
    <location>
        <begin position="243"/>
        <end position="253"/>
    </location>
</feature>
<feature type="helix" evidence="4">
    <location>
        <begin position="257"/>
        <end position="275"/>
    </location>
</feature>
<feature type="strand" evidence="4">
    <location>
        <begin position="285"/>
        <end position="290"/>
    </location>
</feature>
<feature type="strand" evidence="4">
    <location>
        <begin position="305"/>
        <end position="309"/>
    </location>
</feature>
<feature type="helix" evidence="4">
    <location>
        <begin position="317"/>
        <end position="330"/>
    </location>
</feature>
<feature type="helix" evidence="4">
    <location>
        <begin position="340"/>
        <end position="351"/>
    </location>
</feature>
<feature type="strand" evidence="4">
    <location>
        <begin position="370"/>
        <end position="375"/>
    </location>
</feature>
<feature type="strand" evidence="4">
    <location>
        <begin position="388"/>
        <end position="396"/>
    </location>
</feature>
<feature type="strand" evidence="4">
    <location>
        <begin position="405"/>
        <end position="412"/>
    </location>
</feature>
<feature type="strand" evidence="4">
    <location>
        <begin position="415"/>
        <end position="423"/>
    </location>
</feature>
<feature type="turn" evidence="4">
    <location>
        <begin position="424"/>
        <end position="426"/>
    </location>
</feature>
<feature type="turn" evidence="4">
    <location>
        <begin position="428"/>
        <end position="431"/>
    </location>
</feature>
<feature type="helix" evidence="4">
    <location>
        <begin position="432"/>
        <end position="450"/>
    </location>
</feature>
<accession>Q8GGG1</accession>
<keyword id="KW-0002">3D-structure</keyword>
<keyword id="KW-0012">Acyltransferase</keyword>
<keyword id="KW-0319">Glycerol metabolism</keyword>
<keyword id="KW-0444">Lipid biosynthesis</keyword>
<keyword id="KW-0443">Lipid metabolism</keyword>
<keyword id="KW-0808">Transferase</keyword>
<proteinExistence type="evidence at protein level"/>
<organism>
    <name type="scientific">Acinetobacter baylyi (strain ATCC 33305 / BD413 / ADP1)</name>
    <dbReference type="NCBI Taxonomy" id="62977"/>
    <lineage>
        <taxon>Bacteria</taxon>
        <taxon>Pseudomonadati</taxon>
        <taxon>Pseudomonadota</taxon>
        <taxon>Gammaproteobacteria</taxon>
        <taxon>Moraxellales</taxon>
        <taxon>Moraxellaceae</taxon>
        <taxon>Acinetobacter</taxon>
    </lineage>
</organism>
<comment type="function">
    <text>Bifunctional wax ester synthase/diacylglycerol acyltransferase (WS and DGAT). Catalyzes the terminal and only committed step in triacylglycerol synthesis by using diacylglycerol and fatty acyl CoA as substrates. Required for storage lipid synthesis. WS uses C(12)-CoA to C(18)-CoA substrates whereas DGAT prefers C(20)-CoA. Upon expression in E.coli and Pseudomonas citronellolis (DSM 50332) both WS and DGAT activities increase.</text>
</comment>
<comment type="catalytic activity">
    <reaction>
        <text>a long chain fatty alcohol + a fatty acyl-CoA = a wax ester + CoA</text>
        <dbReference type="Rhea" id="RHEA:38443"/>
        <dbReference type="ChEBI" id="CHEBI:10036"/>
        <dbReference type="ChEBI" id="CHEBI:17135"/>
        <dbReference type="ChEBI" id="CHEBI:57287"/>
        <dbReference type="ChEBI" id="CHEBI:77636"/>
        <dbReference type="EC" id="2.3.1.75"/>
    </reaction>
</comment>
<comment type="catalytic activity">
    <reaction>
        <text>an acyl-CoA + a 1,2-diacyl-sn-glycerol = a triacyl-sn-glycerol + CoA</text>
        <dbReference type="Rhea" id="RHEA:10868"/>
        <dbReference type="ChEBI" id="CHEBI:17815"/>
        <dbReference type="ChEBI" id="CHEBI:57287"/>
        <dbReference type="ChEBI" id="CHEBI:58342"/>
        <dbReference type="ChEBI" id="CHEBI:64615"/>
        <dbReference type="EC" id="2.3.1.20"/>
    </reaction>
</comment>
<comment type="biophysicochemical properties">
    <kinetics>
        <KM evidence="2">15.6 uM for palmitoyl-CoA (C(16), in wax synthase)</KM>
        <KM evidence="2">21.1 uM for palmitoyl-CoA (diacylglycerol acyltransferase)</KM>
        <Vmax evidence="2">212.8 pmol/min/mg enzyme (wax synthase)</Vmax>
        <Vmax evidence="2">54.3 pmol/min/mg enzyme (diacylglycerol acyltransferase)</Vmax>
    </kinetics>
</comment>
<comment type="pathway">
    <text>Glycerolipid metabolism; triacylglycerol biosynthesis.</text>
</comment>
<comment type="disruption phenotype">
    <text evidence="2">Cells lacking this gene do not make wax ester and only trace amounts of triacylglycerol.</text>
</comment>
<comment type="similarity">
    <text evidence="3">Belongs to the long-chain O-acyltransferase family.</text>
</comment>